<reference key="1">
    <citation type="journal article" date="2002" name="Proc. Natl. Acad. Sci. U.S.A.">
        <title>The Brucella suis genome reveals fundamental similarities between animal and plant pathogens and symbionts.</title>
        <authorList>
            <person name="Paulsen I.T."/>
            <person name="Seshadri R."/>
            <person name="Nelson K.E."/>
            <person name="Eisen J.A."/>
            <person name="Heidelberg J.F."/>
            <person name="Read T.D."/>
            <person name="Dodson R.J."/>
            <person name="Umayam L.A."/>
            <person name="Brinkac L.M."/>
            <person name="Beanan M.J."/>
            <person name="Daugherty S.C."/>
            <person name="DeBoy R.T."/>
            <person name="Durkin A.S."/>
            <person name="Kolonay J.F."/>
            <person name="Madupu R."/>
            <person name="Nelson W.C."/>
            <person name="Ayodeji B."/>
            <person name="Kraul M."/>
            <person name="Shetty J."/>
            <person name="Malek J.A."/>
            <person name="Van Aken S.E."/>
            <person name="Riedmuller S."/>
            <person name="Tettelin H."/>
            <person name="Gill S.R."/>
            <person name="White O."/>
            <person name="Salzberg S.L."/>
            <person name="Hoover D.L."/>
            <person name="Lindler L.E."/>
            <person name="Halling S.M."/>
            <person name="Boyle S.M."/>
            <person name="Fraser C.M."/>
        </authorList>
    </citation>
    <scope>NUCLEOTIDE SEQUENCE [LARGE SCALE GENOMIC DNA]</scope>
    <source>
        <strain>1330</strain>
    </source>
</reference>
<reference key="2">
    <citation type="journal article" date="2011" name="J. Bacteriol.">
        <title>Revised genome sequence of Brucella suis 1330.</title>
        <authorList>
            <person name="Tae H."/>
            <person name="Shallom S."/>
            <person name="Settlage R."/>
            <person name="Preston D."/>
            <person name="Adams L.G."/>
            <person name="Garner H.R."/>
        </authorList>
    </citation>
    <scope>NUCLEOTIDE SEQUENCE [LARGE SCALE GENOMIC DNA]</scope>
    <source>
        <strain>1330</strain>
    </source>
</reference>
<accession>Q8FWR0</accession>
<accession>G0KCC4</accession>
<sequence>MPAKGPLTPQQLSLINRYWRAANYLSVGQIYLMKNPLLREPLQPEHIKPRLLGHWGTTPGLNFIYAHLNRIIQQRNANVIYICGPGHGGPGMVANTYLEGTYSEIYPAISEDEAGMERLFRQFSFPGGIPSHAAPETPGSIHEGGELGYALVHAYGAAFDNPDLVVACVVGDGEAETGALATSWHSNKFLNPARDGAVLPILHLNGYKIANPTVLARLSDDDLDNLFRGYGYEPFFVEGSEPADMHQKMAATLDTIFQRIQDIKKNADVHSPERPRWPMIILRSPKGWTGPKTVDGLVVENYWRAHQVPVANCRENDAHRKILEDWMKSYDPSDLFDEKGALKPELRALAPKGEARIGANPHANGGLLRKELHMPDFRQYAVNVTEPGAIEAQSTKILGDFLRDVMKLNETEKNFRIFGPDETASNRLGSVLEATNRVWMAETLDMDDHLAADGRVMEVLSEHLCQGWLEGYLLSGRHGFFSCYEAFIHIIDSMFNQHAKWLQVARELEWRKPISSLNYLLTSHVWRQDHNGFSHQDPGFVDLVANKSADIVRVYFPPDANTLLWVGDHCLKTWNRVNVIVAGKQPEPQWLTMAEAEKHCEAGLGIWEWAGTEDGLEPDIVMACAGDVPTMETLAAVDLLRQSLPHLRIRVVNVVDLMVLQSPHQHPHGISDEEFDRMFTTNRPVIFAYHGYPYLIHRLVYKRTNHSNFHVRGFIEQGTTTTPFDMTVLNELDRFHLAMEAVERLPLGESVAKPLIDNFTEKLALHKDYIRQHGEDMPEIRDWKWTWPR</sequence>
<keyword id="KW-0456">Lyase</keyword>
<keyword id="KW-0786">Thiamine pyrophosphate</keyword>
<protein>
    <recommendedName>
        <fullName evidence="1">Probable phosphoketolase</fullName>
        <ecNumber evidence="1">4.1.2.-</ecNumber>
    </recommendedName>
</protein>
<proteinExistence type="inferred from homology"/>
<feature type="chain" id="PRO_0000193873" description="Probable phosphoketolase">
    <location>
        <begin position="1"/>
        <end position="789"/>
    </location>
</feature>
<organism>
    <name type="scientific">Brucella suis biovar 1 (strain 1330)</name>
    <dbReference type="NCBI Taxonomy" id="204722"/>
    <lineage>
        <taxon>Bacteria</taxon>
        <taxon>Pseudomonadati</taxon>
        <taxon>Pseudomonadota</taxon>
        <taxon>Alphaproteobacteria</taxon>
        <taxon>Hyphomicrobiales</taxon>
        <taxon>Brucellaceae</taxon>
        <taxon>Brucella/Ochrobactrum group</taxon>
        <taxon>Brucella</taxon>
    </lineage>
</organism>
<comment type="cofactor">
    <cofactor evidence="1">
        <name>thiamine diphosphate</name>
        <dbReference type="ChEBI" id="CHEBI:58937"/>
    </cofactor>
</comment>
<comment type="similarity">
    <text evidence="1">Belongs to the XFP family.</text>
</comment>
<evidence type="ECO:0000255" key="1">
    <source>
        <dbReference type="HAMAP-Rule" id="MF_01403"/>
    </source>
</evidence>
<gene>
    <name type="primary">xfp</name>
    <name type="ordered locus">BRA0385</name>
    <name type="ordered locus">BS1330_II0382</name>
</gene>
<name>PHK_BRUSU</name>
<dbReference type="EC" id="4.1.2.-" evidence="1"/>
<dbReference type="EMBL" id="AE014292">
    <property type="protein sequence ID" value="AAN33583.1"/>
    <property type="molecule type" value="Genomic_DNA"/>
</dbReference>
<dbReference type="EMBL" id="CP002998">
    <property type="protein sequence ID" value="AEM19862.1"/>
    <property type="molecule type" value="Genomic_DNA"/>
</dbReference>
<dbReference type="SMR" id="Q8FWR0"/>
<dbReference type="KEGG" id="bms:BRA0385"/>
<dbReference type="KEGG" id="bsi:BS1330_II0382"/>
<dbReference type="HOGENOM" id="CLU_013954_2_0_5"/>
<dbReference type="PRO" id="PR:Q8FWR0"/>
<dbReference type="Proteomes" id="UP000007104">
    <property type="component" value="Chromosome II"/>
</dbReference>
<dbReference type="GO" id="GO:0016832">
    <property type="term" value="F:aldehyde-lyase activity"/>
    <property type="evidence" value="ECO:0007669"/>
    <property type="project" value="UniProtKB-UniRule"/>
</dbReference>
<dbReference type="GO" id="GO:0005975">
    <property type="term" value="P:carbohydrate metabolic process"/>
    <property type="evidence" value="ECO:0007669"/>
    <property type="project" value="InterPro"/>
</dbReference>
<dbReference type="CDD" id="cd02011">
    <property type="entry name" value="TPP_PK"/>
    <property type="match status" value="1"/>
</dbReference>
<dbReference type="FunFam" id="3.40.50.970:FF:000091">
    <property type="entry name" value="Xylulose-5-phosphate/fructose-6-phosphate phosphoketolase"/>
    <property type="match status" value="1"/>
</dbReference>
<dbReference type="Gene3D" id="3.40.50.920">
    <property type="match status" value="1"/>
</dbReference>
<dbReference type="Gene3D" id="3.40.50.970">
    <property type="match status" value="2"/>
</dbReference>
<dbReference type="HAMAP" id="MF_01403">
    <property type="entry name" value="Phosphoketolase"/>
    <property type="match status" value="1"/>
</dbReference>
<dbReference type="InterPro" id="IPR023962">
    <property type="entry name" value="Phosphoketolase"/>
</dbReference>
<dbReference type="InterPro" id="IPR029061">
    <property type="entry name" value="THDP-binding"/>
</dbReference>
<dbReference type="InterPro" id="IPR009014">
    <property type="entry name" value="Transketo_C/PFOR_II"/>
</dbReference>
<dbReference type="InterPro" id="IPR005593">
    <property type="entry name" value="Xul5P/Fru6P_PKetolase"/>
</dbReference>
<dbReference type="InterPro" id="IPR018969">
    <property type="entry name" value="Xul5P/Fru6P_PKetolase_C"/>
</dbReference>
<dbReference type="InterPro" id="IPR019790">
    <property type="entry name" value="Xul5P/Fru6P_PKetolase_CS"/>
</dbReference>
<dbReference type="InterPro" id="IPR018970">
    <property type="entry name" value="Xul5P/Fru6P_PKetolase_N"/>
</dbReference>
<dbReference type="InterPro" id="IPR019789">
    <property type="entry name" value="Xul5P/Fru6P_PKetolase_ThDP_BS"/>
</dbReference>
<dbReference type="NCBIfam" id="NF003616">
    <property type="entry name" value="PRK05261.1-1"/>
    <property type="match status" value="1"/>
</dbReference>
<dbReference type="NCBIfam" id="NF003617">
    <property type="entry name" value="PRK05261.1-2"/>
    <property type="match status" value="1"/>
</dbReference>
<dbReference type="NCBIfam" id="NF003619">
    <property type="entry name" value="PRK05261.1-4"/>
    <property type="match status" value="1"/>
</dbReference>
<dbReference type="NCBIfam" id="NF003621">
    <property type="entry name" value="PRK05261.1-6"/>
    <property type="match status" value="1"/>
</dbReference>
<dbReference type="PANTHER" id="PTHR31273">
    <property type="entry name" value="PHOSPHOKETOLASE-RELATED"/>
    <property type="match status" value="1"/>
</dbReference>
<dbReference type="PANTHER" id="PTHR31273:SF0">
    <property type="entry name" value="PHOSPHOKETOLASE-RELATED"/>
    <property type="match status" value="1"/>
</dbReference>
<dbReference type="Pfam" id="PF03894">
    <property type="entry name" value="XFP"/>
    <property type="match status" value="1"/>
</dbReference>
<dbReference type="Pfam" id="PF09363">
    <property type="entry name" value="XFP_C"/>
    <property type="match status" value="1"/>
</dbReference>
<dbReference type="Pfam" id="PF09364">
    <property type="entry name" value="XFP_N"/>
    <property type="match status" value="1"/>
</dbReference>
<dbReference type="PIRSF" id="PIRSF017245">
    <property type="entry name" value="Phosphoketolase"/>
    <property type="match status" value="1"/>
</dbReference>
<dbReference type="SUPFAM" id="SSF52518">
    <property type="entry name" value="Thiamin diphosphate-binding fold (THDP-binding)"/>
    <property type="match status" value="2"/>
</dbReference>
<dbReference type="PROSITE" id="PS60002">
    <property type="entry name" value="PHOSPHOKETOLASE_1"/>
    <property type="match status" value="1"/>
</dbReference>
<dbReference type="PROSITE" id="PS60003">
    <property type="entry name" value="PHOSPHOKETOLASE_2"/>
    <property type="match status" value="1"/>
</dbReference>